<organism>
    <name type="scientific">Arabidopsis thaliana</name>
    <name type="common">Mouse-ear cress</name>
    <dbReference type="NCBI Taxonomy" id="3702"/>
    <lineage>
        <taxon>Eukaryota</taxon>
        <taxon>Viridiplantae</taxon>
        <taxon>Streptophyta</taxon>
        <taxon>Embryophyta</taxon>
        <taxon>Tracheophyta</taxon>
        <taxon>Spermatophyta</taxon>
        <taxon>Magnoliopsida</taxon>
        <taxon>eudicotyledons</taxon>
        <taxon>Gunneridae</taxon>
        <taxon>Pentapetalae</taxon>
        <taxon>rosids</taxon>
        <taxon>malvids</taxon>
        <taxon>Brassicales</taxon>
        <taxon>Brassicaceae</taxon>
        <taxon>Camelineae</taxon>
        <taxon>Arabidopsis</taxon>
    </lineage>
</organism>
<sequence>MESSRVVVGGGLPLANRRNSSFAKPKIQQGTFLPLSRINNVSAPQKCSLHTNPNPMFPFVTRRKSQTNPDCGVVKLGEEDDSCSSLDKLPEVNGVHTGVARPVDIKRELVMLSLPAIAGQAIDPLTLLMETAYIGRLGSVELGSAGVSMAIFNTISKLFNIPLLSVATSFVAEDIAKIAAQDLASEDSQSDIPSQGLPERKQLSSVSTALVLAIGIGIFEALALSLASGPFLRLMGIQSMSEMFIPARQFLVLRALGAPAYVVSLALQGIFRGFKDTKTPVYCLGIGNFLAVFLFPLFIYKFRMGVAGAAISSVISQYTVAILMLILLNKRVILLPPKIGSLKFGDYLKSGGFVLGRTLSVLVTMTVATSMAARQGVFAMAAHQICMQVWLAVSLLTDALASSGQALIASSASKRDFEGVKEVTTFVLKIGVVTGIALAIVLGMSFSSIAGLFSKDPEVLRIVRKGVLFVAATQPITALAFIFDGLHYGMSDFPYAACSMMVVGGISSAFMLYAPAGLGLSGVWVGLSMFMGLRMVAGFSRLMWRKGPWWFMHTSDKRLA</sequence>
<keyword id="KW-0150">Chloroplast</keyword>
<keyword id="KW-0472">Membrane</keyword>
<keyword id="KW-0934">Plastid</keyword>
<keyword id="KW-1185">Reference proteome</keyword>
<keyword id="KW-0809">Transit peptide</keyword>
<keyword id="KW-0812">Transmembrane</keyword>
<keyword id="KW-1133">Transmembrane helix</keyword>
<keyword id="KW-0813">Transport</keyword>
<name>DTX45_ARATH</name>
<proteinExistence type="evidence at transcript level"/>
<protein>
    <recommendedName>
        <fullName evidence="3">Protein DETOXIFICATION 45, chloroplastic</fullName>
        <shortName evidence="3">AtDTX45</shortName>
    </recommendedName>
    <alternativeName>
        <fullName evidence="4">Multidrug and toxic compound extrusion protein 45</fullName>
        <shortName evidence="4">MATE protein 45</shortName>
    </alternativeName>
</protein>
<dbReference type="EMBL" id="AL035539">
    <property type="protein sequence ID" value="CAB37494.1"/>
    <property type="molecule type" value="Genomic_DNA"/>
</dbReference>
<dbReference type="EMBL" id="AL161593">
    <property type="protein sequence ID" value="CAB80503.1"/>
    <property type="molecule type" value="Genomic_DNA"/>
</dbReference>
<dbReference type="EMBL" id="CP002687">
    <property type="protein sequence ID" value="AEE86921.1"/>
    <property type="molecule type" value="Genomic_DNA"/>
</dbReference>
<dbReference type="EMBL" id="CP002687">
    <property type="protein sequence ID" value="ANM68079.1"/>
    <property type="molecule type" value="Genomic_DNA"/>
</dbReference>
<dbReference type="PIR" id="T05666">
    <property type="entry name" value="T05666"/>
</dbReference>
<dbReference type="RefSeq" id="NP_001329858.1">
    <property type="nucleotide sequence ID" value="NM_001342492.1"/>
</dbReference>
<dbReference type="RefSeq" id="NP_195551.5">
    <property type="nucleotide sequence ID" value="NM_120000.7"/>
</dbReference>
<dbReference type="SMR" id="Q9SVE7"/>
<dbReference type="FunCoup" id="Q9SVE7">
    <property type="interactions" value="8"/>
</dbReference>
<dbReference type="STRING" id="3702.Q9SVE7"/>
<dbReference type="iPTMnet" id="Q9SVE7"/>
<dbReference type="PaxDb" id="3702-AT4G38380.1"/>
<dbReference type="EnsemblPlants" id="AT4G38380.1">
    <property type="protein sequence ID" value="AT4G38380.1"/>
    <property type="gene ID" value="AT4G38380"/>
</dbReference>
<dbReference type="EnsemblPlants" id="AT4G38380.2">
    <property type="protein sequence ID" value="AT4G38380.2"/>
    <property type="gene ID" value="AT4G38380"/>
</dbReference>
<dbReference type="GeneID" id="829995"/>
<dbReference type="Gramene" id="AT4G38380.1">
    <property type="protein sequence ID" value="AT4G38380.1"/>
    <property type="gene ID" value="AT4G38380"/>
</dbReference>
<dbReference type="Gramene" id="AT4G38380.2">
    <property type="protein sequence ID" value="AT4G38380.2"/>
    <property type="gene ID" value="AT4G38380"/>
</dbReference>
<dbReference type="KEGG" id="ath:AT4G38380"/>
<dbReference type="Araport" id="AT4G38380"/>
<dbReference type="TAIR" id="AT4G38380"/>
<dbReference type="eggNOG" id="KOG1347">
    <property type="taxonomic scope" value="Eukaryota"/>
</dbReference>
<dbReference type="HOGENOM" id="CLU_012893_16_2_1"/>
<dbReference type="InParanoid" id="Q9SVE7"/>
<dbReference type="OrthoDB" id="2126698at2759"/>
<dbReference type="PRO" id="PR:Q9SVE7"/>
<dbReference type="Proteomes" id="UP000006548">
    <property type="component" value="Chromosome 4"/>
</dbReference>
<dbReference type="ExpressionAtlas" id="Q9SVE7">
    <property type="expression patterns" value="baseline and differential"/>
</dbReference>
<dbReference type="GO" id="GO:0009507">
    <property type="term" value="C:chloroplast"/>
    <property type="evidence" value="ECO:0007005"/>
    <property type="project" value="TAIR"/>
</dbReference>
<dbReference type="GO" id="GO:0031969">
    <property type="term" value="C:chloroplast membrane"/>
    <property type="evidence" value="ECO:0007669"/>
    <property type="project" value="UniProtKB-SubCell"/>
</dbReference>
<dbReference type="GO" id="GO:0015297">
    <property type="term" value="F:antiporter activity"/>
    <property type="evidence" value="ECO:0007669"/>
    <property type="project" value="InterPro"/>
</dbReference>
<dbReference type="GO" id="GO:0042910">
    <property type="term" value="F:xenobiotic transmembrane transporter activity"/>
    <property type="evidence" value="ECO:0007669"/>
    <property type="project" value="InterPro"/>
</dbReference>
<dbReference type="CDD" id="cd13136">
    <property type="entry name" value="MATE_DinF_like"/>
    <property type="match status" value="1"/>
</dbReference>
<dbReference type="InterPro" id="IPR044644">
    <property type="entry name" value="DinF-like"/>
</dbReference>
<dbReference type="InterPro" id="IPR002528">
    <property type="entry name" value="MATE_fam"/>
</dbReference>
<dbReference type="NCBIfam" id="TIGR00797">
    <property type="entry name" value="matE"/>
    <property type="match status" value="1"/>
</dbReference>
<dbReference type="PANTHER" id="PTHR42893">
    <property type="entry name" value="PROTEIN DETOXIFICATION 44, CHLOROPLASTIC-RELATED"/>
    <property type="match status" value="1"/>
</dbReference>
<dbReference type="PANTHER" id="PTHR42893:SF45">
    <property type="entry name" value="PROTEIN DETOXIFICATION 45, CHLOROPLASTIC"/>
    <property type="match status" value="1"/>
</dbReference>
<dbReference type="Pfam" id="PF01554">
    <property type="entry name" value="MatE"/>
    <property type="match status" value="2"/>
</dbReference>
<reference key="1">
    <citation type="journal article" date="1999" name="Nature">
        <title>Sequence and analysis of chromosome 4 of the plant Arabidopsis thaliana.</title>
        <authorList>
            <person name="Mayer K.F.X."/>
            <person name="Schueller C."/>
            <person name="Wambutt R."/>
            <person name="Murphy G."/>
            <person name="Volckaert G."/>
            <person name="Pohl T."/>
            <person name="Duesterhoeft A."/>
            <person name="Stiekema W."/>
            <person name="Entian K.-D."/>
            <person name="Terryn N."/>
            <person name="Harris B."/>
            <person name="Ansorge W."/>
            <person name="Brandt P."/>
            <person name="Grivell L.A."/>
            <person name="Rieger M."/>
            <person name="Weichselgartner M."/>
            <person name="de Simone V."/>
            <person name="Obermaier B."/>
            <person name="Mache R."/>
            <person name="Mueller M."/>
            <person name="Kreis M."/>
            <person name="Delseny M."/>
            <person name="Puigdomenech P."/>
            <person name="Watson M."/>
            <person name="Schmidtheini T."/>
            <person name="Reichert B."/>
            <person name="Portetelle D."/>
            <person name="Perez-Alonso M."/>
            <person name="Boutry M."/>
            <person name="Bancroft I."/>
            <person name="Vos P."/>
            <person name="Hoheisel J."/>
            <person name="Zimmermann W."/>
            <person name="Wedler H."/>
            <person name="Ridley P."/>
            <person name="Langham S.-A."/>
            <person name="McCullagh B."/>
            <person name="Bilham L."/>
            <person name="Robben J."/>
            <person name="van der Schueren J."/>
            <person name="Grymonprez B."/>
            <person name="Chuang Y.-J."/>
            <person name="Vandenbussche F."/>
            <person name="Braeken M."/>
            <person name="Weltjens I."/>
            <person name="Voet M."/>
            <person name="Bastiaens I."/>
            <person name="Aert R."/>
            <person name="Defoor E."/>
            <person name="Weitzenegger T."/>
            <person name="Bothe G."/>
            <person name="Ramsperger U."/>
            <person name="Hilbert H."/>
            <person name="Braun M."/>
            <person name="Holzer E."/>
            <person name="Brandt A."/>
            <person name="Peters S."/>
            <person name="van Staveren M."/>
            <person name="Dirkse W."/>
            <person name="Mooijman P."/>
            <person name="Klein Lankhorst R."/>
            <person name="Rose M."/>
            <person name="Hauf J."/>
            <person name="Koetter P."/>
            <person name="Berneiser S."/>
            <person name="Hempel S."/>
            <person name="Feldpausch M."/>
            <person name="Lamberth S."/>
            <person name="Van den Daele H."/>
            <person name="De Keyser A."/>
            <person name="Buysshaert C."/>
            <person name="Gielen J."/>
            <person name="Villarroel R."/>
            <person name="De Clercq R."/>
            <person name="van Montagu M."/>
            <person name="Rogers J."/>
            <person name="Cronin A."/>
            <person name="Quail M.A."/>
            <person name="Bray-Allen S."/>
            <person name="Clark L."/>
            <person name="Doggett J."/>
            <person name="Hall S."/>
            <person name="Kay M."/>
            <person name="Lennard N."/>
            <person name="McLay K."/>
            <person name="Mayes R."/>
            <person name="Pettett A."/>
            <person name="Rajandream M.A."/>
            <person name="Lyne M."/>
            <person name="Benes V."/>
            <person name="Rechmann S."/>
            <person name="Borkova D."/>
            <person name="Bloecker H."/>
            <person name="Scharfe M."/>
            <person name="Grimm M."/>
            <person name="Loehnert T.-H."/>
            <person name="Dose S."/>
            <person name="de Haan M."/>
            <person name="Maarse A.C."/>
            <person name="Schaefer M."/>
            <person name="Mueller-Auer S."/>
            <person name="Gabel C."/>
            <person name="Fuchs M."/>
            <person name="Fartmann B."/>
            <person name="Granderath K."/>
            <person name="Dauner D."/>
            <person name="Herzl A."/>
            <person name="Neumann S."/>
            <person name="Argiriou A."/>
            <person name="Vitale D."/>
            <person name="Liguori R."/>
            <person name="Piravandi E."/>
            <person name="Massenet O."/>
            <person name="Quigley F."/>
            <person name="Clabauld G."/>
            <person name="Muendlein A."/>
            <person name="Felber R."/>
            <person name="Schnabl S."/>
            <person name="Hiller R."/>
            <person name="Schmidt W."/>
            <person name="Lecharny A."/>
            <person name="Aubourg S."/>
            <person name="Chefdor F."/>
            <person name="Cooke R."/>
            <person name="Berger C."/>
            <person name="Monfort A."/>
            <person name="Casacuberta E."/>
            <person name="Gibbons T."/>
            <person name="Weber N."/>
            <person name="Vandenbol M."/>
            <person name="Bargues M."/>
            <person name="Terol J."/>
            <person name="Torres A."/>
            <person name="Perez-Perez A."/>
            <person name="Purnelle B."/>
            <person name="Bent E."/>
            <person name="Johnson S."/>
            <person name="Tacon D."/>
            <person name="Jesse T."/>
            <person name="Heijnen L."/>
            <person name="Schwarz S."/>
            <person name="Scholler P."/>
            <person name="Heber S."/>
            <person name="Francs P."/>
            <person name="Bielke C."/>
            <person name="Frishman D."/>
            <person name="Haase D."/>
            <person name="Lemcke K."/>
            <person name="Mewes H.-W."/>
            <person name="Stocker S."/>
            <person name="Zaccaria P."/>
            <person name="Bevan M."/>
            <person name="Wilson R.K."/>
            <person name="de la Bastide M."/>
            <person name="Habermann K."/>
            <person name="Parnell L."/>
            <person name="Dedhia N."/>
            <person name="Gnoj L."/>
            <person name="Schutz K."/>
            <person name="Huang E."/>
            <person name="Spiegel L."/>
            <person name="Sekhon M."/>
            <person name="Murray J."/>
            <person name="Sheet P."/>
            <person name="Cordes M."/>
            <person name="Abu-Threideh J."/>
            <person name="Stoneking T."/>
            <person name="Kalicki J."/>
            <person name="Graves T."/>
            <person name="Harmon G."/>
            <person name="Edwards J."/>
            <person name="Latreille P."/>
            <person name="Courtney L."/>
            <person name="Cloud J."/>
            <person name="Abbott A."/>
            <person name="Scott K."/>
            <person name="Johnson D."/>
            <person name="Minx P."/>
            <person name="Bentley D."/>
            <person name="Fulton B."/>
            <person name="Miller N."/>
            <person name="Greco T."/>
            <person name="Kemp K."/>
            <person name="Kramer J."/>
            <person name="Fulton L."/>
            <person name="Mardis E."/>
            <person name="Dante M."/>
            <person name="Pepin K."/>
            <person name="Hillier L.W."/>
            <person name="Nelson J."/>
            <person name="Spieth J."/>
            <person name="Ryan E."/>
            <person name="Andrews S."/>
            <person name="Geisel C."/>
            <person name="Layman D."/>
            <person name="Du H."/>
            <person name="Ali J."/>
            <person name="Berghoff A."/>
            <person name="Jones K."/>
            <person name="Drone K."/>
            <person name="Cotton M."/>
            <person name="Joshu C."/>
            <person name="Antonoiu B."/>
            <person name="Zidanic M."/>
            <person name="Strong C."/>
            <person name="Sun H."/>
            <person name="Lamar B."/>
            <person name="Yordan C."/>
            <person name="Ma P."/>
            <person name="Zhong J."/>
            <person name="Preston R."/>
            <person name="Vil D."/>
            <person name="Shekher M."/>
            <person name="Matero A."/>
            <person name="Shah R."/>
            <person name="Swaby I.K."/>
            <person name="O'Shaughnessy A."/>
            <person name="Rodriguez M."/>
            <person name="Hoffman J."/>
            <person name="Till S."/>
            <person name="Granat S."/>
            <person name="Shohdy N."/>
            <person name="Hasegawa A."/>
            <person name="Hameed A."/>
            <person name="Lodhi M."/>
            <person name="Johnson A."/>
            <person name="Chen E."/>
            <person name="Marra M.A."/>
            <person name="Martienssen R."/>
            <person name="McCombie W.R."/>
        </authorList>
    </citation>
    <scope>NUCLEOTIDE SEQUENCE [LARGE SCALE GENOMIC DNA]</scope>
    <source>
        <strain>cv. Columbia</strain>
    </source>
</reference>
<reference key="2">
    <citation type="journal article" date="2017" name="Plant J.">
        <title>Araport11: a complete reannotation of the Arabidopsis thaliana reference genome.</title>
        <authorList>
            <person name="Cheng C.Y."/>
            <person name="Krishnakumar V."/>
            <person name="Chan A.P."/>
            <person name="Thibaud-Nissen F."/>
            <person name="Schobel S."/>
            <person name="Town C.D."/>
        </authorList>
    </citation>
    <scope>GENOME REANNOTATION</scope>
    <source>
        <strain>cv. Columbia</strain>
    </source>
</reference>
<reference key="3">
    <citation type="journal article" date="2002" name="J. Biol. Chem.">
        <title>Functional cloning and characterization of a plant efflux carrier for multidrug and heavy metal detoxification.</title>
        <authorList>
            <person name="Li L."/>
            <person name="He Z."/>
            <person name="Pandey G.K."/>
            <person name="Tsuchiya T."/>
            <person name="Luan S."/>
        </authorList>
    </citation>
    <scope>GENE FAMILY</scope>
    <scope>NOMENCLATURE</scope>
</reference>
<reference key="4">
    <citation type="journal article" date="2003" name="Eur. J. Biochem.">
        <title>The multidrug/oligosaccharidyl-lipid/polysaccharide (MOP) exporter superfamily.</title>
        <authorList>
            <person name="Hvorup R.N."/>
            <person name="Winnen B."/>
            <person name="Chang A.B."/>
            <person name="Jiang Y."/>
            <person name="Zhou X.F."/>
            <person name="Saier M.H. Jr."/>
        </authorList>
    </citation>
    <scope>GENE FAMILY</scope>
</reference>
<reference key="5">
    <citation type="journal article" date="2009" name="Plant J.">
        <title>Aluminum-activated citrate and malate transporters from the MATE and ALMT families function independently to confer Arabidopsis aluminum tolerance.</title>
        <authorList>
            <person name="Liu J."/>
            <person name="Magalhaes J.V."/>
            <person name="Shaff J."/>
            <person name="Kochian L.V."/>
        </authorList>
    </citation>
    <scope>INDUCTION</scope>
    <scope>TISSUE SPECIFICITY</scope>
    <scope>DISRUPTION PHENOTYPE</scope>
</reference>
<comment type="subcellular location">
    <subcellularLocation>
        <location evidence="4">Plastid</location>
        <location evidence="4">Chloroplast membrane</location>
        <topology evidence="4">Multi-pass membrane protein</topology>
    </subcellularLocation>
</comment>
<comment type="tissue specificity">
    <text evidence="2">Ubiquitous.</text>
</comment>
<comment type="induction">
    <text evidence="2">Not induced by aluminum.</text>
</comment>
<comment type="disruption phenotype">
    <text evidence="2">No reduction in aluminum tolerance.</text>
</comment>
<comment type="similarity">
    <text evidence="4">Belongs to the multi antimicrobial extrusion (MATE) (TC 2.A.66.1) family.</text>
</comment>
<accession>Q9SVE7</accession>
<evidence type="ECO:0000255" key="1"/>
<evidence type="ECO:0000269" key="2">
    <source>
    </source>
</evidence>
<evidence type="ECO:0000303" key="3">
    <source>
    </source>
</evidence>
<evidence type="ECO:0000305" key="4"/>
<evidence type="ECO:0000312" key="5">
    <source>
        <dbReference type="Araport" id="AT4G38380"/>
    </source>
</evidence>
<evidence type="ECO:0000312" key="6">
    <source>
        <dbReference type="EMBL" id="CAB37494.1"/>
    </source>
</evidence>
<feature type="transit peptide" description="Chloroplast" evidence="1">
    <location>
        <begin position="1"/>
        <end position="75"/>
    </location>
</feature>
<feature type="chain" id="PRO_0000405274" description="Protein DETOXIFICATION 45, chloroplastic">
    <location>
        <begin position="76"/>
        <end position="560"/>
    </location>
</feature>
<feature type="transmembrane region" description="Helical" evidence="1">
    <location>
        <begin position="109"/>
        <end position="129"/>
    </location>
</feature>
<feature type="transmembrane region" description="Helical" evidence="1">
    <location>
        <begin position="147"/>
        <end position="167"/>
    </location>
</feature>
<feature type="transmembrane region" description="Helical" evidence="1">
    <location>
        <begin position="209"/>
        <end position="229"/>
    </location>
</feature>
<feature type="transmembrane region" description="Helical" evidence="1">
    <location>
        <begin position="250"/>
        <end position="270"/>
    </location>
</feature>
<feature type="transmembrane region" description="Helical" evidence="1">
    <location>
        <begin position="280"/>
        <end position="300"/>
    </location>
</feature>
<feature type="transmembrane region" description="Helical" evidence="1">
    <location>
        <begin position="308"/>
        <end position="328"/>
    </location>
</feature>
<feature type="transmembrane region" description="Helical" evidence="1">
    <location>
        <begin position="353"/>
        <end position="373"/>
    </location>
</feature>
<feature type="transmembrane region" description="Helical" evidence="1">
    <location>
        <begin position="389"/>
        <end position="411"/>
    </location>
</feature>
<feature type="transmembrane region" description="Helical" evidence="1">
    <location>
        <begin position="426"/>
        <end position="446"/>
    </location>
</feature>
<feature type="transmembrane region" description="Helical" evidence="1">
    <location>
        <begin position="466"/>
        <end position="486"/>
    </location>
</feature>
<feature type="transmembrane region" description="Helical" evidence="1">
    <location>
        <begin position="495"/>
        <end position="515"/>
    </location>
</feature>
<feature type="transmembrane region" description="Helical" evidence="1">
    <location>
        <begin position="523"/>
        <end position="543"/>
    </location>
</feature>
<gene>
    <name evidence="3" type="primary">DTX45</name>
    <name evidence="5" type="ordered locus">At4g38380</name>
    <name evidence="6" type="ORF">F22I13.150</name>
</gene>